<gene>
    <name type="primary">NUTM2E</name>
    <name type="synonym">FAM22E</name>
</gene>
<name>NTM2E_HUMAN</name>
<comment type="similarity">
    <text evidence="2">Belongs to the NUT family.</text>
</comment>
<protein>
    <recommendedName>
        <fullName>NUT family member 2E</fullName>
    </recommendedName>
</protein>
<sequence>MEVKGPSGRSFCCESEGQFKSCLKRHTPSLLLPSSWKGNSGSCLMAEALHRTSPTPNSCPLPLPLCRMSGVLCSRNLFTFKFSLFQLDSGASGEPGHSLGLTLGFSYCGNCQTAVVSAQPEGMASNGAYPVLGPGVTANPGTSLSVFTALPFTTPAPGPAHGPLLVTAGAPPGGPLVLSTFPSTPLVTEQDGCSPSGAGASNVFVQMRTEVGPVKAAQAQTLVLTQAPLVWQAPGALCGGVVCPPPLLLAAAPVVPVMAAQVVGGTQACEGGWSQGLPLPPPPPPAAQLPPIVSQGNAGPWPQGAHGESSLASSQAKAPPDDSCNPRSVYENFRLWQHYKPLARRHLPQSPDTEALSCFLIPVLRSLARRKPTMTLEEGLWRAMREWQHTSNFDRMIFYEMAEKFLEFEAEEEMQIQKSQWMKGPQCLPPPATPRLEPRGPPAPEVVKQPVYLPSKAGPKAQTACLPPPRPQRPVTKARRPPPQPHRRAETKARLPPPRPQRPAETKVPEEIPPEVVQEYVDIMEELLGPSLGATGEPEKQREEGKVKQPQEEDWTPPDPGLLSYIDKLCSQKDFVTKVEAVIHPQFLEELLSPDPQMDFLALSQDLEQEEGLTLAQLVEKRLPPLKEKQHSRAAPSRGTARLDSSSSKFAAGQGAERDVPDPQEGVGMETCPPQTTARDSQGRGRAHTGMARSEDSVVLLGCQDSPGLRAARPTSPPQDHRPTCPGVGTKDALDLPGGSPVRESHGLAQGSSEEEELPSLAFLLGSQHKLLPWWLPQSPVPASGLLSPEKWGPQGTHQSPSAERRGLNLAPSPANKAKKQPLFGSLSPAEKTPHRGPGLRVSGEQSLTWGLGGPSQSQKRKGDPLVSRKEKKQHCSQ</sequence>
<dbReference type="EMBL" id="AL135925">
    <property type="status" value="NOT_ANNOTATED_CDS"/>
    <property type="molecule type" value="Genomic_DNA"/>
</dbReference>
<dbReference type="CCDS" id="CCDS91285.1"/>
<dbReference type="RefSeq" id="NP_001342192.1">
    <property type="nucleotide sequence ID" value="NM_001355263.2"/>
</dbReference>
<dbReference type="SMR" id="B1AL46"/>
<dbReference type="STRING" id="9606.ENSP00000407521"/>
<dbReference type="BioMuta" id="NUTM2E"/>
<dbReference type="jPOST" id="B1AL46"/>
<dbReference type="MassIVE" id="B1AL46"/>
<dbReference type="PaxDb" id="9606-ENSP00000407521"/>
<dbReference type="PeptideAtlas" id="B1AL46"/>
<dbReference type="Ensembl" id="ENST00000429984.5">
    <property type="protein sequence ID" value="ENSP00000407521.2"/>
    <property type="gene ID" value="ENSG00000228570.8"/>
</dbReference>
<dbReference type="GeneID" id="283008"/>
<dbReference type="MANE-Select" id="ENST00000429984.5">
    <property type="protein sequence ID" value="ENSP00000407521.2"/>
    <property type="RefSeq nucleotide sequence ID" value="NM_001355263.2"/>
    <property type="RefSeq protein sequence ID" value="NP_001342192.1"/>
</dbReference>
<dbReference type="UCSC" id="uc057umg.1">
    <property type="organism name" value="human"/>
</dbReference>
<dbReference type="AGR" id="HGNC:23448"/>
<dbReference type="GeneCards" id="NUTM2E"/>
<dbReference type="HGNC" id="HGNC:23448">
    <property type="gene designation" value="NUTM2E"/>
</dbReference>
<dbReference type="HPA" id="ENSG00000228570">
    <property type="expression patterns" value="Low tissue specificity"/>
</dbReference>
<dbReference type="MalaCards" id="NUTM2E"/>
<dbReference type="neXtProt" id="NX_B1AL46"/>
<dbReference type="OpenTargets" id="ENSG00000228570"/>
<dbReference type="Orphanet" id="457246">
    <property type="disease" value="Clear cell sarcoma of kidney"/>
</dbReference>
<dbReference type="PharmGKB" id="PA134988973"/>
<dbReference type="VEuPathDB" id="HostDB:ENSG00000228570"/>
<dbReference type="eggNOG" id="ENOG502RU0F">
    <property type="taxonomic scope" value="Eukaryota"/>
</dbReference>
<dbReference type="GeneTree" id="ENSGT00410000025793"/>
<dbReference type="HOGENOM" id="CLU_021726_0_0_1"/>
<dbReference type="InParanoid" id="B1AL46"/>
<dbReference type="OMA" id="ICFARET"/>
<dbReference type="OrthoDB" id="9536811at2759"/>
<dbReference type="PAN-GO" id="B1AL46">
    <property type="GO annotations" value="0 GO annotations based on evolutionary models"/>
</dbReference>
<dbReference type="PhylomeDB" id="B1AL46"/>
<dbReference type="TreeFam" id="TF337728"/>
<dbReference type="PathwayCommons" id="B1AL46"/>
<dbReference type="ChiTaRS" id="NUTM2E">
    <property type="organism name" value="human"/>
</dbReference>
<dbReference type="Pharos" id="B1AL46">
    <property type="development level" value="Tdark"/>
</dbReference>
<dbReference type="PRO" id="PR:B1AL46"/>
<dbReference type="Proteomes" id="UP000005640">
    <property type="component" value="Chromosome 10"/>
</dbReference>
<dbReference type="RNAct" id="B1AL46">
    <property type="molecule type" value="protein"/>
</dbReference>
<dbReference type="Bgee" id="ENSG00000228570">
    <property type="expression patterns" value="Expressed in stromal cell of endometrium and 95 other cell types or tissues"/>
</dbReference>
<dbReference type="ExpressionAtlas" id="B1AL46">
    <property type="expression patterns" value="baseline and differential"/>
</dbReference>
<dbReference type="InterPro" id="IPR024310">
    <property type="entry name" value="NUT"/>
</dbReference>
<dbReference type="InterPro" id="IPR024309">
    <property type="entry name" value="NUT_N"/>
</dbReference>
<dbReference type="PANTHER" id="PTHR22879">
    <property type="entry name" value="NUT FAMILY MEMBER 1"/>
    <property type="match status" value="1"/>
</dbReference>
<dbReference type="PANTHER" id="PTHR22879:SF14">
    <property type="entry name" value="NUT FAMILY MEMBER 2A-RELATED"/>
    <property type="match status" value="1"/>
</dbReference>
<dbReference type="Pfam" id="PF12881">
    <property type="entry name" value="NUT"/>
    <property type="match status" value="1"/>
</dbReference>
<proteinExistence type="inferred from homology"/>
<reference key="1">
    <citation type="journal article" date="2004" name="Nature">
        <title>The DNA sequence and comparative analysis of human chromosome 10.</title>
        <authorList>
            <person name="Deloukas P."/>
            <person name="Earthrowl M.E."/>
            <person name="Grafham D.V."/>
            <person name="Rubenfield M."/>
            <person name="French L."/>
            <person name="Steward C.A."/>
            <person name="Sims S.K."/>
            <person name="Jones M.C."/>
            <person name="Searle S."/>
            <person name="Scott C."/>
            <person name="Howe K."/>
            <person name="Hunt S.E."/>
            <person name="Andrews T.D."/>
            <person name="Gilbert J.G.R."/>
            <person name="Swarbreck D."/>
            <person name="Ashurst J.L."/>
            <person name="Taylor A."/>
            <person name="Battles J."/>
            <person name="Bird C.P."/>
            <person name="Ainscough R."/>
            <person name="Almeida J.P."/>
            <person name="Ashwell R.I.S."/>
            <person name="Ambrose K.D."/>
            <person name="Babbage A.K."/>
            <person name="Bagguley C.L."/>
            <person name="Bailey J."/>
            <person name="Banerjee R."/>
            <person name="Bates K."/>
            <person name="Beasley H."/>
            <person name="Bray-Allen S."/>
            <person name="Brown A.J."/>
            <person name="Brown J.Y."/>
            <person name="Burford D.C."/>
            <person name="Burrill W."/>
            <person name="Burton J."/>
            <person name="Cahill P."/>
            <person name="Camire D."/>
            <person name="Carter N.P."/>
            <person name="Chapman J.C."/>
            <person name="Clark S.Y."/>
            <person name="Clarke G."/>
            <person name="Clee C.M."/>
            <person name="Clegg S."/>
            <person name="Corby N."/>
            <person name="Coulson A."/>
            <person name="Dhami P."/>
            <person name="Dutta I."/>
            <person name="Dunn M."/>
            <person name="Faulkner L."/>
            <person name="Frankish A."/>
            <person name="Frankland J.A."/>
            <person name="Garner P."/>
            <person name="Garnett J."/>
            <person name="Gribble S."/>
            <person name="Griffiths C."/>
            <person name="Grocock R."/>
            <person name="Gustafson E."/>
            <person name="Hammond S."/>
            <person name="Harley J.L."/>
            <person name="Hart E."/>
            <person name="Heath P.D."/>
            <person name="Ho T.P."/>
            <person name="Hopkins B."/>
            <person name="Horne J."/>
            <person name="Howden P.J."/>
            <person name="Huckle E."/>
            <person name="Hynds C."/>
            <person name="Johnson C."/>
            <person name="Johnson D."/>
            <person name="Kana A."/>
            <person name="Kay M."/>
            <person name="Kimberley A.M."/>
            <person name="Kershaw J.K."/>
            <person name="Kokkinaki M."/>
            <person name="Laird G.K."/>
            <person name="Lawlor S."/>
            <person name="Lee H.M."/>
            <person name="Leongamornlert D.A."/>
            <person name="Laird G."/>
            <person name="Lloyd C."/>
            <person name="Lloyd D.M."/>
            <person name="Loveland J."/>
            <person name="Lovell J."/>
            <person name="McLaren S."/>
            <person name="McLay K.E."/>
            <person name="McMurray A."/>
            <person name="Mashreghi-Mohammadi M."/>
            <person name="Matthews L."/>
            <person name="Milne S."/>
            <person name="Nickerson T."/>
            <person name="Nguyen M."/>
            <person name="Overton-Larty E."/>
            <person name="Palmer S.A."/>
            <person name="Pearce A.V."/>
            <person name="Peck A.I."/>
            <person name="Pelan S."/>
            <person name="Phillimore B."/>
            <person name="Porter K."/>
            <person name="Rice C.M."/>
            <person name="Rogosin A."/>
            <person name="Ross M.T."/>
            <person name="Sarafidou T."/>
            <person name="Sehra H.K."/>
            <person name="Shownkeen R."/>
            <person name="Skuce C.D."/>
            <person name="Smith M."/>
            <person name="Standring L."/>
            <person name="Sycamore N."/>
            <person name="Tester J."/>
            <person name="Thorpe A."/>
            <person name="Torcasso W."/>
            <person name="Tracey A."/>
            <person name="Tromans A."/>
            <person name="Tsolas J."/>
            <person name="Wall M."/>
            <person name="Walsh J."/>
            <person name="Wang H."/>
            <person name="Weinstock K."/>
            <person name="West A.P."/>
            <person name="Willey D.L."/>
            <person name="Whitehead S.L."/>
            <person name="Wilming L."/>
            <person name="Wray P.W."/>
            <person name="Young L."/>
            <person name="Chen Y."/>
            <person name="Lovering R.C."/>
            <person name="Moschonas N.K."/>
            <person name="Siebert R."/>
            <person name="Fechtel K."/>
            <person name="Bentley D."/>
            <person name="Durbin R.M."/>
            <person name="Hubbard T."/>
            <person name="Doucette-Stamm L."/>
            <person name="Beck S."/>
            <person name="Smith D.R."/>
            <person name="Rogers J."/>
        </authorList>
    </citation>
    <scope>NUCLEOTIDE SEQUENCE [LARGE SCALE GENOMIC DNA]</scope>
</reference>
<evidence type="ECO:0000256" key="1">
    <source>
        <dbReference type="SAM" id="MobiDB-lite"/>
    </source>
</evidence>
<evidence type="ECO:0000305" key="2"/>
<feature type="chain" id="PRO_0000337994" description="NUT family member 2E">
    <location>
        <begin position="1"/>
        <end position="878"/>
    </location>
</feature>
<feature type="region of interest" description="Disordered" evidence="1">
    <location>
        <begin position="273"/>
        <end position="324"/>
    </location>
</feature>
<feature type="region of interest" description="Disordered" evidence="1">
    <location>
        <begin position="417"/>
        <end position="511"/>
    </location>
</feature>
<feature type="region of interest" description="Disordered" evidence="1">
    <location>
        <begin position="527"/>
        <end position="560"/>
    </location>
</feature>
<feature type="region of interest" description="Disordered" evidence="1">
    <location>
        <begin position="622"/>
        <end position="757"/>
    </location>
</feature>
<feature type="region of interest" description="Disordered" evidence="1">
    <location>
        <begin position="775"/>
        <end position="878"/>
    </location>
</feature>
<feature type="compositionally biased region" description="Pro residues" evidence="1">
    <location>
        <begin position="278"/>
        <end position="288"/>
    </location>
</feature>
<feature type="compositionally biased region" description="Pro residues" evidence="1">
    <location>
        <begin position="427"/>
        <end position="444"/>
    </location>
</feature>
<feature type="compositionally biased region" description="Basic and acidic residues" evidence="1">
    <location>
        <begin position="537"/>
        <end position="551"/>
    </location>
</feature>
<feature type="compositionally biased region" description="Basic and acidic residues" evidence="1">
    <location>
        <begin position="622"/>
        <end position="631"/>
    </location>
</feature>
<organism>
    <name type="scientific">Homo sapiens</name>
    <name type="common">Human</name>
    <dbReference type="NCBI Taxonomy" id="9606"/>
    <lineage>
        <taxon>Eukaryota</taxon>
        <taxon>Metazoa</taxon>
        <taxon>Chordata</taxon>
        <taxon>Craniata</taxon>
        <taxon>Vertebrata</taxon>
        <taxon>Euteleostomi</taxon>
        <taxon>Mammalia</taxon>
        <taxon>Eutheria</taxon>
        <taxon>Euarchontoglires</taxon>
        <taxon>Primates</taxon>
        <taxon>Haplorrhini</taxon>
        <taxon>Catarrhini</taxon>
        <taxon>Hominidae</taxon>
        <taxon>Homo</taxon>
    </lineage>
</organism>
<keyword id="KW-1185">Reference proteome</keyword>
<accession>B1AL46</accession>
<accession>A6NHL0</accession>